<organism>
    <name type="scientific">Pelodictyon phaeoclathratiforme (strain DSM 5477 / BU-1)</name>
    <dbReference type="NCBI Taxonomy" id="324925"/>
    <lineage>
        <taxon>Bacteria</taxon>
        <taxon>Pseudomonadati</taxon>
        <taxon>Chlorobiota</taxon>
        <taxon>Chlorobiia</taxon>
        <taxon>Chlorobiales</taxon>
        <taxon>Chlorobiaceae</taxon>
        <taxon>Chlorobium/Pelodictyon group</taxon>
        <taxon>Pelodictyon</taxon>
    </lineage>
</organism>
<reference key="1">
    <citation type="submission" date="2008-06" db="EMBL/GenBank/DDBJ databases">
        <title>Complete sequence of Pelodictyon phaeoclathratiforme BU-1.</title>
        <authorList>
            <consortium name="US DOE Joint Genome Institute"/>
            <person name="Lucas S."/>
            <person name="Copeland A."/>
            <person name="Lapidus A."/>
            <person name="Glavina del Rio T."/>
            <person name="Dalin E."/>
            <person name="Tice H."/>
            <person name="Bruce D."/>
            <person name="Goodwin L."/>
            <person name="Pitluck S."/>
            <person name="Schmutz J."/>
            <person name="Larimer F."/>
            <person name="Land M."/>
            <person name="Hauser L."/>
            <person name="Kyrpides N."/>
            <person name="Mikhailova N."/>
            <person name="Liu Z."/>
            <person name="Li T."/>
            <person name="Zhao F."/>
            <person name="Overmann J."/>
            <person name="Bryant D.A."/>
            <person name="Richardson P."/>
        </authorList>
    </citation>
    <scope>NUCLEOTIDE SEQUENCE [LARGE SCALE GENOMIC DNA]</scope>
    <source>
        <strain>DSM 5477 / BU-1</strain>
    </source>
</reference>
<gene>
    <name evidence="1" type="primary">rpsU</name>
    <name type="ordered locus">Ppha_2551</name>
</gene>
<feature type="chain" id="PRO_1000120644" description="Small ribosomal subunit protein bS21">
    <location>
        <begin position="1"/>
        <end position="65"/>
    </location>
</feature>
<feature type="region of interest" description="Disordered" evidence="2">
    <location>
        <begin position="45"/>
        <end position="65"/>
    </location>
</feature>
<feature type="compositionally biased region" description="Basic residues" evidence="2">
    <location>
        <begin position="48"/>
        <end position="57"/>
    </location>
</feature>
<accession>B4SFD4</accession>
<dbReference type="EMBL" id="CP001110">
    <property type="protein sequence ID" value="ACF44713.1"/>
    <property type="molecule type" value="Genomic_DNA"/>
</dbReference>
<dbReference type="RefSeq" id="WP_012509186.1">
    <property type="nucleotide sequence ID" value="NC_011060.1"/>
</dbReference>
<dbReference type="SMR" id="B4SFD4"/>
<dbReference type="STRING" id="324925.Ppha_2551"/>
<dbReference type="KEGG" id="pph:Ppha_2551"/>
<dbReference type="eggNOG" id="COG0828">
    <property type="taxonomic scope" value="Bacteria"/>
</dbReference>
<dbReference type="HOGENOM" id="CLU_159258_2_1_10"/>
<dbReference type="OrthoDB" id="598353at2"/>
<dbReference type="Proteomes" id="UP000002724">
    <property type="component" value="Chromosome"/>
</dbReference>
<dbReference type="GO" id="GO:1990904">
    <property type="term" value="C:ribonucleoprotein complex"/>
    <property type="evidence" value="ECO:0007669"/>
    <property type="project" value="UniProtKB-KW"/>
</dbReference>
<dbReference type="GO" id="GO:0005840">
    <property type="term" value="C:ribosome"/>
    <property type="evidence" value="ECO:0007669"/>
    <property type="project" value="UniProtKB-KW"/>
</dbReference>
<dbReference type="GO" id="GO:0003735">
    <property type="term" value="F:structural constituent of ribosome"/>
    <property type="evidence" value="ECO:0007669"/>
    <property type="project" value="InterPro"/>
</dbReference>
<dbReference type="GO" id="GO:0006412">
    <property type="term" value="P:translation"/>
    <property type="evidence" value="ECO:0007669"/>
    <property type="project" value="UniProtKB-UniRule"/>
</dbReference>
<dbReference type="Gene3D" id="1.20.5.1150">
    <property type="entry name" value="Ribosomal protein S8"/>
    <property type="match status" value="1"/>
</dbReference>
<dbReference type="HAMAP" id="MF_00358">
    <property type="entry name" value="Ribosomal_bS21"/>
    <property type="match status" value="1"/>
</dbReference>
<dbReference type="InterPro" id="IPR001911">
    <property type="entry name" value="Ribosomal_bS21"/>
</dbReference>
<dbReference type="InterPro" id="IPR038380">
    <property type="entry name" value="Ribosomal_bS21_sf"/>
</dbReference>
<dbReference type="NCBIfam" id="TIGR00030">
    <property type="entry name" value="S21p"/>
    <property type="match status" value="1"/>
</dbReference>
<dbReference type="Pfam" id="PF01165">
    <property type="entry name" value="Ribosomal_S21"/>
    <property type="match status" value="1"/>
</dbReference>
<dbReference type="PRINTS" id="PR00976">
    <property type="entry name" value="RIBOSOMALS21"/>
</dbReference>
<protein>
    <recommendedName>
        <fullName evidence="1">Small ribosomal subunit protein bS21</fullName>
    </recommendedName>
    <alternativeName>
        <fullName evidence="3">30S ribosomal protein S21</fullName>
    </alternativeName>
</protein>
<keyword id="KW-1185">Reference proteome</keyword>
<keyword id="KW-0687">Ribonucleoprotein</keyword>
<keyword id="KW-0689">Ribosomal protein</keyword>
<evidence type="ECO:0000255" key="1">
    <source>
        <dbReference type="HAMAP-Rule" id="MF_00358"/>
    </source>
</evidence>
<evidence type="ECO:0000256" key="2">
    <source>
        <dbReference type="SAM" id="MobiDB-lite"/>
    </source>
</evidence>
<evidence type="ECO:0000305" key="3"/>
<name>RS21_PELPB</name>
<comment type="similarity">
    <text evidence="1">Belongs to the bacterial ribosomal protein bS21 family.</text>
</comment>
<proteinExistence type="inferred from homology"/>
<sequence>MVSVQINDNESIDKMLKRFKKKYERAGVLKEFRANAYFVKPSVDGRLKRSRSRRRAQRANEERNS</sequence>